<proteinExistence type="inferred from homology"/>
<dbReference type="EC" id="7.1.1.-" evidence="1"/>
<dbReference type="EMBL" id="AE014613">
    <property type="protein sequence ID" value="AAO68243.1"/>
    <property type="molecule type" value="Genomic_DNA"/>
</dbReference>
<dbReference type="EMBL" id="AL513382">
    <property type="protein sequence ID" value="CAD07559.1"/>
    <property type="molecule type" value="Genomic_DNA"/>
</dbReference>
<dbReference type="RefSeq" id="NP_456869.1">
    <property type="nucleotide sequence ID" value="NC_003198.1"/>
</dbReference>
<dbReference type="RefSeq" id="WP_000386728.1">
    <property type="nucleotide sequence ID" value="NZ_WSUR01000029.1"/>
</dbReference>
<dbReference type="SMR" id="Q8XGN7"/>
<dbReference type="STRING" id="220341.gene:17586456"/>
<dbReference type="KEGG" id="stt:t0537"/>
<dbReference type="KEGG" id="sty:STY2557"/>
<dbReference type="PATRIC" id="fig|220341.7.peg.2587"/>
<dbReference type="eggNOG" id="COG0377">
    <property type="taxonomic scope" value="Bacteria"/>
</dbReference>
<dbReference type="HOGENOM" id="CLU_055737_7_3_6"/>
<dbReference type="OMA" id="CGGPYWE"/>
<dbReference type="OrthoDB" id="9786737at2"/>
<dbReference type="Proteomes" id="UP000000541">
    <property type="component" value="Chromosome"/>
</dbReference>
<dbReference type="Proteomes" id="UP000002670">
    <property type="component" value="Chromosome"/>
</dbReference>
<dbReference type="GO" id="GO:0005886">
    <property type="term" value="C:plasma membrane"/>
    <property type="evidence" value="ECO:0007669"/>
    <property type="project" value="UniProtKB-SubCell"/>
</dbReference>
<dbReference type="GO" id="GO:0045271">
    <property type="term" value="C:respiratory chain complex I"/>
    <property type="evidence" value="ECO:0007669"/>
    <property type="project" value="TreeGrafter"/>
</dbReference>
<dbReference type="GO" id="GO:0051539">
    <property type="term" value="F:4 iron, 4 sulfur cluster binding"/>
    <property type="evidence" value="ECO:0007669"/>
    <property type="project" value="UniProtKB-KW"/>
</dbReference>
<dbReference type="GO" id="GO:0005506">
    <property type="term" value="F:iron ion binding"/>
    <property type="evidence" value="ECO:0007669"/>
    <property type="project" value="UniProtKB-UniRule"/>
</dbReference>
<dbReference type="GO" id="GO:0008137">
    <property type="term" value="F:NADH dehydrogenase (ubiquinone) activity"/>
    <property type="evidence" value="ECO:0007669"/>
    <property type="project" value="InterPro"/>
</dbReference>
<dbReference type="GO" id="GO:0050136">
    <property type="term" value="F:NADH:ubiquinone reductase (non-electrogenic) activity"/>
    <property type="evidence" value="ECO:0007669"/>
    <property type="project" value="UniProtKB-UniRule"/>
</dbReference>
<dbReference type="GO" id="GO:0048038">
    <property type="term" value="F:quinone binding"/>
    <property type="evidence" value="ECO:0007669"/>
    <property type="project" value="UniProtKB-KW"/>
</dbReference>
<dbReference type="GO" id="GO:0009060">
    <property type="term" value="P:aerobic respiration"/>
    <property type="evidence" value="ECO:0007669"/>
    <property type="project" value="TreeGrafter"/>
</dbReference>
<dbReference type="GO" id="GO:0015990">
    <property type="term" value="P:electron transport coupled proton transport"/>
    <property type="evidence" value="ECO:0007669"/>
    <property type="project" value="TreeGrafter"/>
</dbReference>
<dbReference type="FunFam" id="3.40.50.12280:FF:000002">
    <property type="entry name" value="NADH-quinone oxidoreductase subunit B"/>
    <property type="match status" value="1"/>
</dbReference>
<dbReference type="Gene3D" id="3.40.50.12280">
    <property type="match status" value="1"/>
</dbReference>
<dbReference type="HAMAP" id="MF_01356">
    <property type="entry name" value="NDH1_NuoB"/>
    <property type="match status" value="1"/>
</dbReference>
<dbReference type="InterPro" id="IPR006137">
    <property type="entry name" value="NADH_UbQ_OxRdtase-like_20kDa"/>
</dbReference>
<dbReference type="InterPro" id="IPR006138">
    <property type="entry name" value="NADH_UQ_OxRdtase_20Kd_su"/>
</dbReference>
<dbReference type="NCBIfam" id="TIGR01957">
    <property type="entry name" value="nuoB_fam"/>
    <property type="match status" value="1"/>
</dbReference>
<dbReference type="NCBIfam" id="NF005012">
    <property type="entry name" value="PRK06411.1"/>
    <property type="match status" value="1"/>
</dbReference>
<dbReference type="PANTHER" id="PTHR11995">
    <property type="entry name" value="NADH DEHYDROGENASE"/>
    <property type="match status" value="1"/>
</dbReference>
<dbReference type="PANTHER" id="PTHR11995:SF14">
    <property type="entry name" value="NADH DEHYDROGENASE [UBIQUINONE] IRON-SULFUR PROTEIN 7, MITOCHONDRIAL"/>
    <property type="match status" value="1"/>
</dbReference>
<dbReference type="Pfam" id="PF01058">
    <property type="entry name" value="Oxidored_q6"/>
    <property type="match status" value="1"/>
</dbReference>
<dbReference type="SUPFAM" id="SSF56770">
    <property type="entry name" value="HydA/Nqo6-like"/>
    <property type="match status" value="1"/>
</dbReference>
<dbReference type="PROSITE" id="PS01150">
    <property type="entry name" value="COMPLEX1_20K"/>
    <property type="match status" value="1"/>
</dbReference>
<keyword id="KW-0004">4Fe-4S</keyword>
<keyword id="KW-0997">Cell inner membrane</keyword>
<keyword id="KW-1003">Cell membrane</keyword>
<keyword id="KW-0408">Iron</keyword>
<keyword id="KW-0411">Iron-sulfur</keyword>
<keyword id="KW-0472">Membrane</keyword>
<keyword id="KW-0479">Metal-binding</keyword>
<keyword id="KW-0520">NAD</keyword>
<keyword id="KW-0874">Quinone</keyword>
<keyword id="KW-1278">Translocase</keyword>
<keyword id="KW-0813">Transport</keyword>
<keyword id="KW-0830">Ubiquinone</keyword>
<feature type="chain" id="PRO_0000376371" description="NADH-quinone oxidoreductase subunit B">
    <location>
        <begin position="1"/>
        <end position="220"/>
    </location>
</feature>
<feature type="binding site" evidence="1">
    <location>
        <position position="63"/>
    </location>
    <ligand>
        <name>[4Fe-4S] cluster</name>
        <dbReference type="ChEBI" id="CHEBI:49883"/>
    </ligand>
</feature>
<feature type="binding site" evidence="1">
    <location>
        <position position="64"/>
    </location>
    <ligand>
        <name>[4Fe-4S] cluster</name>
        <dbReference type="ChEBI" id="CHEBI:49883"/>
    </ligand>
</feature>
<feature type="binding site" evidence="1">
    <location>
        <position position="129"/>
    </location>
    <ligand>
        <name>[4Fe-4S] cluster</name>
        <dbReference type="ChEBI" id="CHEBI:49883"/>
    </ligand>
</feature>
<feature type="binding site" evidence="1">
    <location>
        <position position="158"/>
    </location>
    <ligand>
        <name>[4Fe-4S] cluster</name>
        <dbReference type="ChEBI" id="CHEBI:49883"/>
    </ligand>
</feature>
<evidence type="ECO:0000255" key="1">
    <source>
        <dbReference type="HAMAP-Rule" id="MF_01356"/>
    </source>
</evidence>
<gene>
    <name evidence="1" type="primary">nuoB</name>
    <name type="ordered locus">STY2557</name>
    <name type="ordered locus">t0537</name>
</gene>
<name>NUOB_SALTI</name>
<accession>Q8XGN7</accession>
<accession>Q7AML7</accession>
<reference key="1">
    <citation type="journal article" date="2003" name="J. Bacteriol.">
        <title>Comparative genomics of Salmonella enterica serovar Typhi strains Ty2 and CT18.</title>
        <authorList>
            <person name="Deng W."/>
            <person name="Liou S.-R."/>
            <person name="Plunkett G. III"/>
            <person name="Mayhew G.F."/>
            <person name="Rose D.J."/>
            <person name="Burland V."/>
            <person name="Kodoyianni V."/>
            <person name="Schwartz D.C."/>
            <person name="Blattner F.R."/>
        </authorList>
    </citation>
    <scope>NUCLEOTIDE SEQUENCE [LARGE SCALE GENOMIC DNA]</scope>
    <source>
        <strain>ATCC 700931 / Ty2</strain>
    </source>
</reference>
<reference key="2">
    <citation type="journal article" date="2001" name="Nature">
        <title>Complete genome sequence of a multiple drug resistant Salmonella enterica serovar Typhi CT18.</title>
        <authorList>
            <person name="Parkhill J."/>
            <person name="Dougan G."/>
            <person name="James K.D."/>
            <person name="Thomson N.R."/>
            <person name="Pickard D."/>
            <person name="Wain J."/>
            <person name="Churcher C.M."/>
            <person name="Mungall K.L."/>
            <person name="Bentley S.D."/>
            <person name="Holden M.T.G."/>
            <person name="Sebaihia M."/>
            <person name="Baker S."/>
            <person name="Basham D."/>
            <person name="Brooks K."/>
            <person name="Chillingworth T."/>
            <person name="Connerton P."/>
            <person name="Cronin A."/>
            <person name="Davis P."/>
            <person name="Davies R.M."/>
            <person name="Dowd L."/>
            <person name="White N."/>
            <person name="Farrar J."/>
            <person name="Feltwell T."/>
            <person name="Hamlin N."/>
            <person name="Haque A."/>
            <person name="Hien T.T."/>
            <person name="Holroyd S."/>
            <person name="Jagels K."/>
            <person name="Krogh A."/>
            <person name="Larsen T.S."/>
            <person name="Leather S."/>
            <person name="Moule S."/>
            <person name="O'Gaora P."/>
            <person name="Parry C."/>
            <person name="Quail M.A."/>
            <person name="Rutherford K.M."/>
            <person name="Simmonds M."/>
            <person name="Skelton J."/>
            <person name="Stevens K."/>
            <person name="Whitehead S."/>
            <person name="Barrell B.G."/>
        </authorList>
    </citation>
    <scope>NUCLEOTIDE SEQUENCE [LARGE SCALE GENOMIC DNA]</scope>
    <source>
        <strain>CT18</strain>
    </source>
</reference>
<organism>
    <name type="scientific">Salmonella typhi</name>
    <dbReference type="NCBI Taxonomy" id="90370"/>
    <lineage>
        <taxon>Bacteria</taxon>
        <taxon>Pseudomonadati</taxon>
        <taxon>Pseudomonadota</taxon>
        <taxon>Gammaproteobacteria</taxon>
        <taxon>Enterobacterales</taxon>
        <taxon>Enterobacteriaceae</taxon>
        <taxon>Salmonella</taxon>
    </lineage>
</organism>
<protein>
    <recommendedName>
        <fullName evidence="1">NADH-quinone oxidoreductase subunit B</fullName>
        <ecNumber evidence="1">7.1.1.-</ecNumber>
    </recommendedName>
    <alternativeName>
        <fullName evidence="1">NADH dehydrogenase I subunit B</fullName>
    </alternativeName>
    <alternativeName>
        <fullName evidence="1">NDH-1 subunit B</fullName>
    </alternativeName>
</protein>
<sequence>MDYTLTRIDPNGENDRYPLQKQEIVTDPLEQEVNKNVFMGKLHDMVNWGRKNSIWPYNFGLSCCYVEMVTSFTAVHDVARFGAEVLRASPRQADLMVVAGTCFTKMAPVIQRLYDQMLEPKWVISMGACANSGGMYDIYSVVQGVDKFIPVDVYIPGCPPRPEAYMQALMLLQESIGKERRPLSWVVGDQGVYRANMQPERERKRGERIAVTNLRTPDEI</sequence>
<comment type="function">
    <text evidence="1">NDH-1 shuttles electrons from NADH, via FMN and iron-sulfur (Fe-S) centers, to quinones in the respiratory chain. The immediate electron acceptor for the enzyme in this species is believed to be ubiquinone. Couples the redox reaction to proton translocation (for every two electrons transferred, four hydrogen ions are translocated across the cytoplasmic membrane), and thus conserves the redox energy in a proton gradient.</text>
</comment>
<comment type="catalytic activity">
    <reaction evidence="1">
        <text>a quinone + NADH + 5 H(+)(in) = a quinol + NAD(+) + 4 H(+)(out)</text>
        <dbReference type="Rhea" id="RHEA:57888"/>
        <dbReference type="ChEBI" id="CHEBI:15378"/>
        <dbReference type="ChEBI" id="CHEBI:24646"/>
        <dbReference type="ChEBI" id="CHEBI:57540"/>
        <dbReference type="ChEBI" id="CHEBI:57945"/>
        <dbReference type="ChEBI" id="CHEBI:132124"/>
    </reaction>
</comment>
<comment type="cofactor">
    <cofactor evidence="1">
        <name>[4Fe-4S] cluster</name>
        <dbReference type="ChEBI" id="CHEBI:49883"/>
    </cofactor>
    <text evidence="1">Binds 1 [4Fe-4S] cluster.</text>
</comment>
<comment type="subunit">
    <text evidence="1">NDH-1 is composed of 13 different subunits. Subunits NuoB, CD, E, F, and G constitute the peripheral sector of the complex.</text>
</comment>
<comment type="subcellular location">
    <subcellularLocation>
        <location evidence="1">Cell inner membrane</location>
        <topology evidence="1">Peripheral membrane protein</topology>
        <orientation evidence="1">Cytoplasmic side</orientation>
    </subcellularLocation>
</comment>
<comment type="similarity">
    <text evidence="1">Belongs to the complex I 20 kDa subunit family.</text>
</comment>